<reference key="1">
    <citation type="submission" date="2006-12" db="EMBL/GenBank/DDBJ databases">
        <title>Complete sequence of Pyrobaculum islandicum DSM 4184.</title>
        <authorList>
            <person name="Copeland A."/>
            <person name="Lucas S."/>
            <person name="Lapidus A."/>
            <person name="Barry K."/>
            <person name="Detter J.C."/>
            <person name="Glavina del Rio T."/>
            <person name="Dalin E."/>
            <person name="Tice H."/>
            <person name="Pitluck S."/>
            <person name="Meincke L."/>
            <person name="Brettin T."/>
            <person name="Bruce D."/>
            <person name="Han C."/>
            <person name="Tapia R."/>
            <person name="Gilna P."/>
            <person name="Schmutz J."/>
            <person name="Larimer F."/>
            <person name="Land M."/>
            <person name="Hauser L."/>
            <person name="Kyrpides N."/>
            <person name="Mikhailova N."/>
            <person name="Cozen A.E."/>
            <person name="Fitz-Gibbon S.T."/>
            <person name="House C.H."/>
            <person name="Saltikov C."/>
            <person name="Lowe T."/>
            <person name="Richardson P."/>
        </authorList>
    </citation>
    <scope>NUCLEOTIDE SEQUENCE [LARGE SCALE GENOMIC DNA]</scope>
    <source>
        <strain>DSM 4184 / JCM 9189 / GEO3</strain>
    </source>
</reference>
<comment type="function">
    <text evidence="1">Specifically dimethylates two adjacent adenosines in the loop of a conserved hairpin near the 3'-end of 16S rRNA in the 30S particle. May play a critical role in biogenesis of 30S subunits.</text>
</comment>
<comment type="subcellular location">
    <subcellularLocation>
        <location evidence="1">Cytoplasm</location>
    </subcellularLocation>
</comment>
<comment type="similarity">
    <text evidence="1">Belongs to the class I-like SAM-binding methyltransferase superfamily. rRNA adenine N(6)-methyltransferase family. RsmA subfamily.</text>
</comment>
<dbReference type="EC" id="2.1.1.-" evidence="1"/>
<dbReference type="EMBL" id="CP000504">
    <property type="protein sequence ID" value="ABL87582.1"/>
    <property type="molecule type" value="Genomic_DNA"/>
</dbReference>
<dbReference type="RefSeq" id="WP_011762159.1">
    <property type="nucleotide sequence ID" value="NC_008701.1"/>
</dbReference>
<dbReference type="SMR" id="A1RRK0"/>
<dbReference type="STRING" id="384616.Pisl_0404"/>
<dbReference type="GeneID" id="4616636"/>
<dbReference type="KEGG" id="pis:Pisl_0404"/>
<dbReference type="eggNOG" id="arCOG04131">
    <property type="taxonomic scope" value="Archaea"/>
</dbReference>
<dbReference type="HOGENOM" id="CLU_041220_0_2_2"/>
<dbReference type="OrthoDB" id="9883at2157"/>
<dbReference type="Proteomes" id="UP000002595">
    <property type="component" value="Chromosome"/>
</dbReference>
<dbReference type="GO" id="GO:0005737">
    <property type="term" value="C:cytoplasm"/>
    <property type="evidence" value="ECO:0007669"/>
    <property type="project" value="UniProtKB-SubCell"/>
</dbReference>
<dbReference type="GO" id="GO:0003723">
    <property type="term" value="F:RNA binding"/>
    <property type="evidence" value="ECO:0007669"/>
    <property type="project" value="UniProtKB-KW"/>
</dbReference>
<dbReference type="GO" id="GO:0000179">
    <property type="term" value="F:rRNA (adenine-N6,N6-)-dimethyltransferase activity"/>
    <property type="evidence" value="ECO:0007669"/>
    <property type="project" value="InterPro"/>
</dbReference>
<dbReference type="CDD" id="cd02440">
    <property type="entry name" value="AdoMet_MTases"/>
    <property type="match status" value="1"/>
</dbReference>
<dbReference type="Gene3D" id="3.40.50.150">
    <property type="entry name" value="Vaccinia Virus protein VP39"/>
    <property type="match status" value="1"/>
</dbReference>
<dbReference type="HAMAP" id="MF_00607">
    <property type="entry name" value="16SrRNA_methyltr_A"/>
    <property type="match status" value="1"/>
</dbReference>
<dbReference type="InterPro" id="IPR001737">
    <property type="entry name" value="KsgA/Erm"/>
</dbReference>
<dbReference type="InterPro" id="IPR020596">
    <property type="entry name" value="rRNA_Ade_Mease_Trfase_CS"/>
</dbReference>
<dbReference type="InterPro" id="IPR020598">
    <property type="entry name" value="rRNA_Ade_methylase_Trfase_N"/>
</dbReference>
<dbReference type="InterPro" id="IPR011530">
    <property type="entry name" value="rRNA_adenine_dimethylase"/>
</dbReference>
<dbReference type="InterPro" id="IPR029063">
    <property type="entry name" value="SAM-dependent_MTases_sf"/>
</dbReference>
<dbReference type="NCBIfam" id="TIGR00755">
    <property type="entry name" value="ksgA"/>
    <property type="match status" value="1"/>
</dbReference>
<dbReference type="PANTHER" id="PTHR11727">
    <property type="entry name" value="DIMETHYLADENOSINE TRANSFERASE"/>
    <property type="match status" value="1"/>
</dbReference>
<dbReference type="PANTHER" id="PTHR11727:SF7">
    <property type="entry name" value="DIMETHYLADENOSINE TRANSFERASE-RELATED"/>
    <property type="match status" value="1"/>
</dbReference>
<dbReference type="Pfam" id="PF00398">
    <property type="entry name" value="RrnaAD"/>
    <property type="match status" value="1"/>
</dbReference>
<dbReference type="SMART" id="SM00650">
    <property type="entry name" value="rADc"/>
    <property type="match status" value="1"/>
</dbReference>
<dbReference type="SUPFAM" id="SSF53335">
    <property type="entry name" value="S-adenosyl-L-methionine-dependent methyltransferases"/>
    <property type="match status" value="1"/>
</dbReference>
<dbReference type="PROSITE" id="PS01131">
    <property type="entry name" value="RRNA_A_DIMETH"/>
    <property type="match status" value="1"/>
</dbReference>
<dbReference type="PROSITE" id="PS51689">
    <property type="entry name" value="SAM_RNA_A_N6_MT"/>
    <property type="match status" value="1"/>
</dbReference>
<keyword id="KW-0963">Cytoplasm</keyword>
<keyword id="KW-0489">Methyltransferase</keyword>
<keyword id="KW-0694">RNA-binding</keyword>
<keyword id="KW-0698">rRNA processing</keyword>
<keyword id="KW-0949">S-adenosyl-L-methionine</keyword>
<keyword id="KW-0808">Transferase</keyword>
<proteinExistence type="inferred from homology"/>
<evidence type="ECO:0000255" key="1">
    <source>
        <dbReference type="HAMAP-Rule" id="MF_00607"/>
    </source>
</evidence>
<feature type="chain" id="PRO_1000130309" description="Probable ribosomal RNA small subunit methyltransferase A">
    <location>
        <begin position="1"/>
        <end position="235"/>
    </location>
</feature>
<feature type="binding site" evidence="1">
    <location>
        <position position="9"/>
    </location>
    <ligand>
        <name>S-adenosyl-L-methionine</name>
        <dbReference type="ChEBI" id="CHEBI:59789"/>
    </ligand>
</feature>
<feature type="binding site" evidence="1">
    <location>
        <position position="11"/>
    </location>
    <ligand>
        <name>S-adenosyl-L-methionine</name>
        <dbReference type="ChEBI" id="CHEBI:59789"/>
    </ligand>
</feature>
<feature type="binding site" evidence="1">
    <location>
        <position position="34"/>
    </location>
    <ligand>
        <name>S-adenosyl-L-methionine</name>
        <dbReference type="ChEBI" id="CHEBI:59789"/>
    </ligand>
</feature>
<feature type="binding site" evidence="1">
    <location>
        <position position="55"/>
    </location>
    <ligand>
        <name>S-adenosyl-L-methionine</name>
        <dbReference type="ChEBI" id="CHEBI:59789"/>
    </ligand>
</feature>
<feature type="binding site" evidence="1">
    <location>
        <position position="78"/>
    </location>
    <ligand>
        <name>S-adenosyl-L-methionine</name>
        <dbReference type="ChEBI" id="CHEBI:59789"/>
    </ligand>
</feature>
<feature type="binding site" evidence="1">
    <location>
        <position position="93"/>
    </location>
    <ligand>
        <name>S-adenosyl-L-methionine</name>
        <dbReference type="ChEBI" id="CHEBI:59789"/>
    </ligand>
</feature>
<gene>
    <name evidence="1" type="primary">rsmA</name>
    <name evidence="1" type="synonym">ksgA</name>
    <name type="ordered locus">Pisl_0404</name>
</gene>
<protein>
    <recommendedName>
        <fullName evidence="1">Probable ribosomal RNA small subunit methyltransferase A</fullName>
        <ecNumber evidence="1">2.1.1.-</ecNumber>
    </recommendedName>
    <alternativeName>
        <fullName evidence="1">16S rRNA dimethyladenosine transferase</fullName>
    </alternativeName>
    <alternativeName>
        <fullName evidence="1">16S rRNA dimethylase</fullName>
    </alternativeName>
    <alternativeName>
        <fullName evidence="1">S-adenosylmethionine-6-N',N'-adenosyl(rRNA) dimethyltransferase</fullName>
    </alternativeName>
</protein>
<accession>A1RRK0</accession>
<organism>
    <name type="scientific">Pyrobaculum islandicum (strain DSM 4184 / JCM 9189 / GEO3)</name>
    <dbReference type="NCBI Taxonomy" id="384616"/>
    <lineage>
        <taxon>Archaea</taxon>
        <taxon>Thermoproteota</taxon>
        <taxon>Thermoprotei</taxon>
        <taxon>Thermoproteales</taxon>
        <taxon>Thermoproteaceae</taxon>
        <taxon>Pyrobaculum</taxon>
    </lineage>
</organism>
<sequence>MGKRRWSQHFLRDTSVAQFITELVPSGLDIIEVGPGRGALTLPLAEKSKTIYAIEIDPTLAEFLKRQAPPNVVVIVGDALEIEWPRADFFVSNIPYSITSPLLLKLAKYRLPAVVTIQKEVAERLVAAPGTENYGRLTVAIRCHYDVEVLRILPPHVFSPPPKVYSAVVRLTPRRPCVEDFENFQRFTARLFSTRRKTLRRLKLGETEKRVYQLTLEEIVELYKKHFDTTETCRS</sequence>
<name>RSMA_PYRIL</name>